<organism>
    <name type="scientific">Escherichia coli O17:K52:H18 (strain UMN026 / ExPEC)</name>
    <dbReference type="NCBI Taxonomy" id="585056"/>
    <lineage>
        <taxon>Bacteria</taxon>
        <taxon>Pseudomonadati</taxon>
        <taxon>Pseudomonadota</taxon>
        <taxon>Gammaproteobacteria</taxon>
        <taxon>Enterobacterales</taxon>
        <taxon>Enterobacteriaceae</taxon>
        <taxon>Escherichia</taxon>
    </lineage>
</organism>
<feature type="chain" id="PRO_1000139848" description="HTH-type transcriptional regulator MalT">
    <location>
        <begin position="1"/>
        <end position="901"/>
    </location>
</feature>
<feature type="domain" description="HTH luxR-type" evidence="1">
    <location>
        <begin position="829"/>
        <end position="894"/>
    </location>
</feature>
<feature type="DNA-binding region" description="H-T-H motif" evidence="1">
    <location>
        <begin position="853"/>
        <end position="872"/>
    </location>
</feature>
<feature type="binding site" evidence="1">
    <location>
        <begin position="39"/>
        <end position="46"/>
    </location>
    <ligand>
        <name>ATP</name>
        <dbReference type="ChEBI" id="CHEBI:30616"/>
    </ligand>
</feature>
<keyword id="KW-0010">Activator</keyword>
<keyword id="KW-0067">ATP-binding</keyword>
<keyword id="KW-0119">Carbohydrate metabolism</keyword>
<keyword id="KW-0238">DNA-binding</keyword>
<keyword id="KW-0547">Nucleotide-binding</keyword>
<keyword id="KW-0804">Transcription</keyword>
<keyword id="KW-0805">Transcription regulation</keyword>
<dbReference type="EMBL" id="CU928163">
    <property type="protein sequence ID" value="CAR15023.1"/>
    <property type="molecule type" value="Genomic_DNA"/>
</dbReference>
<dbReference type="RefSeq" id="WP_000906970.1">
    <property type="nucleotide sequence ID" value="NC_011751.1"/>
</dbReference>
<dbReference type="RefSeq" id="YP_002414528.1">
    <property type="nucleotide sequence ID" value="NC_011751.1"/>
</dbReference>
<dbReference type="SMR" id="B7NE23"/>
<dbReference type="STRING" id="585056.ECUMN_3877"/>
<dbReference type="GeneID" id="75202261"/>
<dbReference type="KEGG" id="eum:ECUMN_3877"/>
<dbReference type="PATRIC" id="fig|585056.7.peg.4051"/>
<dbReference type="HOGENOM" id="CLU_006325_3_0_6"/>
<dbReference type="Proteomes" id="UP000007097">
    <property type="component" value="Chromosome"/>
</dbReference>
<dbReference type="GO" id="GO:0005524">
    <property type="term" value="F:ATP binding"/>
    <property type="evidence" value="ECO:0007669"/>
    <property type="project" value="UniProtKB-UniRule"/>
</dbReference>
<dbReference type="GO" id="GO:0003677">
    <property type="term" value="F:DNA binding"/>
    <property type="evidence" value="ECO:0007669"/>
    <property type="project" value="UniProtKB-KW"/>
</dbReference>
<dbReference type="GO" id="GO:0003700">
    <property type="term" value="F:DNA-binding transcription factor activity"/>
    <property type="evidence" value="ECO:0007669"/>
    <property type="project" value="UniProtKB-UniRule"/>
</dbReference>
<dbReference type="GO" id="GO:0045913">
    <property type="term" value="P:positive regulation of carbohydrate metabolic process"/>
    <property type="evidence" value="ECO:0007669"/>
    <property type="project" value="UniProtKB-UniRule"/>
</dbReference>
<dbReference type="GO" id="GO:0045893">
    <property type="term" value="P:positive regulation of DNA-templated transcription"/>
    <property type="evidence" value="ECO:0007669"/>
    <property type="project" value="UniProtKB-UniRule"/>
</dbReference>
<dbReference type="CDD" id="cd06170">
    <property type="entry name" value="LuxR_C_like"/>
    <property type="match status" value="1"/>
</dbReference>
<dbReference type="FunFam" id="1.10.10.10:FF:000115">
    <property type="entry name" value="HTH-type transcriptional regulator MalT"/>
    <property type="match status" value="1"/>
</dbReference>
<dbReference type="FunFam" id="1.25.40.10:FF:000086">
    <property type="entry name" value="HTH-type transcriptional regulator MalT"/>
    <property type="match status" value="1"/>
</dbReference>
<dbReference type="Gene3D" id="3.40.50.300">
    <property type="entry name" value="P-loop containing nucleotide triphosphate hydrolases"/>
    <property type="match status" value="1"/>
</dbReference>
<dbReference type="Gene3D" id="1.25.40.10">
    <property type="entry name" value="Tetratricopeptide repeat domain"/>
    <property type="match status" value="1"/>
</dbReference>
<dbReference type="Gene3D" id="1.10.10.10">
    <property type="entry name" value="Winged helix-like DNA-binding domain superfamily/Winged helix DNA-binding domain"/>
    <property type="match status" value="1"/>
</dbReference>
<dbReference type="HAMAP" id="MF_01247">
    <property type="entry name" value="HTH_type_MalT"/>
    <property type="match status" value="1"/>
</dbReference>
<dbReference type="InterPro" id="IPR027417">
    <property type="entry name" value="P-loop_NTPase"/>
</dbReference>
<dbReference type="InterPro" id="IPR016032">
    <property type="entry name" value="Sig_transdc_resp-reg_C-effctor"/>
</dbReference>
<dbReference type="InterPro" id="IPR011990">
    <property type="entry name" value="TPR-like_helical_dom_sf"/>
</dbReference>
<dbReference type="InterPro" id="IPR041617">
    <property type="entry name" value="TPR_MalT"/>
</dbReference>
<dbReference type="InterPro" id="IPR023768">
    <property type="entry name" value="Tscrpt_reg_HTH_MalT"/>
</dbReference>
<dbReference type="InterPro" id="IPR000792">
    <property type="entry name" value="Tscrpt_reg_LuxR_C"/>
</dbReference>
<dbReference type="InterPro" id="IPR036388">
    <property type="entry name" value="WH-like_DNA-bd_sf"/>
</dbReference>
<dbReference type="NCBIfam" id="NF003420">
    <property type="entry name" value="PRK04841.1"/>
    <property type="match status" value="1"/>
</dbReference>
<dbReference type="PANTHER" id="PTHR44688">
    <property type="entry name" value="DNA-BINDING TRANSCRIPTIONAL ACTIVATOR DEVR_DOSR"/>
    <property type="match status" value="1"/>
</dbReference>
<dbReference type="PANTHER" id="PTHR44688:SF16">
    <property type="entry name" value="DNA-BINDING TRANSCRIPTIONAL ACTIVATOR DEVR_DOSR"/>
    <property type="match status" value="1"/>
</dbReference>
<dbReference type="Pfam" id="PF00196">
    <property type="entry name" value="GerE"/>
    <property type="match status" value="1"/>
</dbReference>
<dbReference type="Pfam" id="PF17874">
    <property type="entry name" value="TPR_MalT"/>
    <property type="match status" value="1"/>
</dbReference>
<dbReference type="PRINTS" id="PR00038">
    <property type="entry name" value="HTHLUXR"/>
</dbReference>
<dbReference type="SMART" id="SM00421">
    <property type="entry name" value="HTH_LUXR"/>
    <property type="match status" value="1"/>
</dbReference>
<dbReference type="SUPFAM" id="SSF46894">
    <property type="entry name" value="C-terminal effector domain of the bipartite response regulators"/>
    <property type="match status" value="1"/>
</dbReference>
<dbReference type="SUPFAM" id="SSF52540">
    <property type="entry name" value="P-loop containing nucleoside triphosphate hydrolases"/>
    <property type="match status" value="1"/>
</dbReference>
<dbReference type="SUPFAM" id="SSF48452">
    <property type="entry name" value="TPR-like"/>
    <property type="match status" value="1"/>
</dbReference>
<dbReference type="PROSITE" id="PS00622">
    <property type="entry name" value="HTH_LUXR_1"/>
    <property type="match status" value="1"/>
</dbReference>
<dbReference type="PROSITE" id="PS50043">
    <property type="entry name" value="HTH_LUXR_2"/>
    <property type="match status" value="1"/>
</dbReference>
<gene>
    <name evidence="1" type="primary">malT</name>
    <name type="ordered locus">ECUMN_3877</name>
</gene>
<protein>
    <recommendedName>
        <fullName evidence="1">HTH-type transcriptional regulator MalT</fullName>
    </recommendedName>
    <alternativeName>
        <fullName evidence="1">ATP-dependent transcriptional activator MalT</fullName>
    </alternativeName>
</protein>
<sequence length="901" mass="103016">MLIPSKLSRPVRLDHTVVRERLLAKLSGANNFRLALITSPAGYGKTTLISQWAAGKNDIGWYSLDEGDNQQERFASYLIAAVQQATNGHCAICETMAQKRQYASLTSLFAQLFIELAEWHSPLYLVIDDYHLITNPVIHESMRFFIRHQPENLTLVVLSRNLPQLGIANLRVRDQLLEIGSQQLAFTHQEAKQFFDCRLSSPIEAAESSRICDDVSGWATALQLIALSARQNTHSAHKSARRLAGINASHLSDYLVDEVLDNVDLATRHFLLKSAILRSMNDALITRVTGEENGQMRLEEIERQGLFLQRMDDTGEWFCYHPLFGNFLRQRCQWELAAELPEIHRAAAESWMAQGFPSEAIHHALAAGDALMLRDILLNHAWSLFNHSELSLLEESLKALPWDSLLENPQLVLLQAWLMQSQHRYGEVNTLLARAEHEIKDIREGTMHAEFNALRAQVAINDGNPDEAERLAKLALEELPPGWFYSRIVATSVLGEVLHCKGELTRSLALMQQTEQMARQHDVWHYALWSLIQQSEILFAQGFLQTAWETQEKAFQLINEQHLEQLPMHEFLVRIRAQLLWAWARLDEAEASARSGIEVLSSYQPQQQLQCLAMLIQCSLARGDLDNARSQLNRLENLLGNGKYHSDWISNANKVRVIYWQMTGDKAAAANWLRHTAKPEFANNHFLQGQWRNIARAQILLGEFEPAEIVLEELNENARSLRLMSDLNRNLLLLNQLYWQAGRKSDAQRVLLDALKLANRTGFISHFVIEGEAMAQQLRQLIQLNTLPELEQHRAQRILREINQHHRHKFAHFDENFVERLLNHPEVPELIRTSPLTQREWQVLGLIYSGYSNEQIAGELEVAATTIKTHIRNLYQKLGVAHRQAAVQHAQKLLKMMGYGV</sequence>
<reference key="1">
    <citation type="journal article" date="2009" name="PLoS Genet.">
        <title>Organised genome dynamics in the Escherichia coli species results in highly diverse adaptive paths.</title>
        <authorList>
            <person name="Touchon M."/>
            <person name="Hoede C."/>
            <person name="Tenaillon O."/>
            <person name="Barbe V."/>
            <person name="Baeriswyl S."/>
            <person name="Bidet P."/>
            <person name="Bingen E."/>
            <person name="Bonacorsi S."/>
            <person name="Bouchier C."/>
            <person name="Bouvet O."/>
            <person name="Calteau A."/>
            <person name="Chiapello H."/>
            <person name="Clermont O."/>
            <person name="Cruveiller S."/>
            <person name="Danchin A."/>
            <person name="Diard M."/>
            <person name="Dossat C."/>
            <person name="Karoui M.E."/>
            <person name="Frapy E."/>
            <person name="Garry L."/>
            <person name="Ghigo J.M."/>
            <person name="Gilles A.M."/>
            <person name="Johnson J."/>
            <person name="Le Bouguenec C."/>
            <person name="Lescat M."/>
            <person name="Mangenot S."/>
            <person name="Martinez-Jehanne V."/>
            <person name="Matic I."/>
            <person name="Nassif X."/>
            <person name="Oztas S."/>
            <person name="Petit M.A."/>
            <person name="Pichon C."/>
            <person name="Rouy Z."/>
            <person name="Ruf C.S."/>
            <person name="Schneider D."/>
            <person name="Tourret J."/>
            <person name="Vacherie B."/>
            <person name="Vallenet D."/>
            <person name="Medigue C."/>
            <person name="Rocha E.P.C."/>
            <person name="Denamur E."/>
        </authorList>
    </citation>
    <scope>NUCLEOTIDE SEQUENCE [LARGE SCALE GENOMIC DNA]</scope>
    <source>
        <strain>UMN026 / ExPEC</strain>
    </source>
</reference>
<evidence type="ECO:0000255" key="1">
    <source>
        <dbReference type="HAMAP-Rule" id="MF_01247"/>
    </source>
</evidence>
<comment type="function">
    <text evidence="1">Positively regulates the transcription of the maltose regulon whose gene products are responsible for uptake and catabolism of malto-oligosaccharides. Specifically binds to the promoter region of its target genes, recognizing a short DNA motif called the MalT box.</text>
</comment>
<comment type="activity regulation">
    <text evidence="1">Activated by ATP and maltotriose, which are both required for DNA binding.</text>
</comment>
<comment type="subunit">
    <text evidence="1">Monomer in solution. Oligomerizes to an active state in the presence of the positive effectors ATP and maltotriose.</text>
</comment>
<comment type="similarity">
    <text evidence="1">Belongs to the MalT family.</text>
</comment>
<name>MALT_ECOLU</name>
<proteinExistence type="inferred from homology"/>
<accession>B7NE23</accession>